<reference key="1">
    <citation type="journal article" date="2002" name="Lancet">
        <title>Genome and virulence determinants of high virulence community-acquired MRSA.</title>
        <authorList>
            <person name="Baba T."/>
            <person name="Takeuchi F."/>
            <person name="Kuroda M."/>
            <person name="Yuzawa H."/>
            <person name="Aoki K."/>
            <person name="Oguchi A."/>
            <person name="Nagai Y."/>
            <person name="Iwama N."/>
            <person name="Asano K."/>
            <person name="Naimi T."/>
            <person name="Kuroda H."/>
            <person name="Cui L."/>
            <person name="Yamamoto K."/>
            <person name="Hiramatsu K."/>
        </authorList>
    </citation>
    <scope>NUCLEOTIDE SEQUENCE [LARGE SCALE GENOMIC DNA]</scope>
    <source>
        <strain>MW2</strain>
    </source>
</reference>
<evidence type="ECO:0000255" key="1">
    <source>
        <dbReference type="HAMAP-Rule" id="MF_01263"/>
    </source>
</evidence>
<organism>
    <name type="scientific">Staphylococcus aureus (strain MW2)</name>
    <dbReference type="NCBI Taxonomy" id="196620"/>
    <lineage>
        <taxon>Bacteria</taxon>
        <taxon>Bacillati</taxon>
        <taxon>Bacillota</taxon>
        <taxon>Bacilli</taxon>
        <taxon>Bacillales</taxon>
        <taxon>Staphylococcaceae</taxon>
        <taxon>Staphylococcus</taxon>
    </lineage>
</organism>
<feature type="chain" id="PRO_0000139050" description="CCA-adding enzyme">
    <location>
        <begin position="1"/>
        <end position="400"/>
    </location>
</feature>
<feature type="binding site" evidence="1">
    <location>
        <position position="28"/>
    </location>
    <ligand>
        <name>ATP</name>
        <dbReference type="ChEBI" id="CHEBI:30616"/>
    </ligand>
</feature>
<feature type="binding site" evidence="1">
    <location>
        <position position="28"/>
    </location>
    <ligand>
        <name>CTP</name>
        <dbReference type="ChEBI" id="CHEBI:37563"/>
    </ligand>
</feature>
<feature type="binding site" evidence="1">
    <location>
        <position position="31"/>
    </location>
    <ligand>
        <name>ATP</name>
        <dbReference type="ChEBI" id="CHEBI:30616"/>
    </ligand>
</feature>
<feature type="binding site" evidence="1">
    <location>
        <position position="31"/>
    </location>
    <ligand>
        <name>CTP</name>
        <dbReference type="ChEBI" id="CHEBI:37563"/>
    </ligand>
</feature>
<feature type="binding site" evidence="1">
    <location>
        <position position="41"/>
    </location>
    <ligand>
        <name>Mg(2+)</name>
        <dbReference type="ChEBI" id="CHEBI:18420"/>
    </ligand>
</feature>
<feature type="binding site" evidence="1">
    <location>
        <position position="43"/>
    </location>
    <ligand>
        <name>Mg(2+)</name>
        <dbReference type="ChEBI" id="CHEBI:18420"/>
    </ligand>
</feature>
<feature type="binding site" evidence="1">
    <location>
        <position position="112"/>
    </location>
    <ligand>
        <name>ATP</name>
        <dbReference type="ChEBI" id="CHEBI:30616"/>
    </ligand>
</feature>
<feature type="binding site" evidence="1">
    <location>
        <position position="112"/>
    </location>
    <ligand>
        <name>CTP</name>
        <dbReference type="ChEBI" id="CHEBI:37563"/>
    </ligand>
</feature>
<feature type="binding site" evidence="1">
    <location>
        <position position="155"/>
    </location>
    <ligand>
        <name>ATP</name>
        <dbReference type="ChEBI" id="CHEBI:30616"/>
    </ligand>
</feature>
<feature type="binding site" evidence="1">
    <location>
        <position position="155"/>
    </location>
    <ligand>
        <name>CTP</name>
        <dbReference type="ChEBI" id="CHEBI:37563"/>
    </ligand>
</feature>
<feature type="binding site" evidence="1">
    <location>
        <position position="158"/>
    </location>
    <ligand>
        <name>ATP</name>
        <dbReference type="ChEBI" id="CHEBI:30616"/>
    </ligand>
</feature>
<feature type="binding site" evidence="1">
    <location>
        <position position="158"/>
    </location>
    <ligand>
        <name>CTP</name>
        <dbReference type="ChEBI" id="CHEBI:37563"/>
    </ligand>
</feature>
<feature type="binding site" evidence="1">
    <location>
        <position position="161"/>
    </location>
    <ligand>
        <name>ATP</name>
        <dbReference type="ChEBI" id="CHEBI:30616"/>
    </ligand>
</feature>
<feature type="binding site" evidence="1">
    <location>
        <position position="161"/>
    </location>
    <ligand>
        <name>CTP</name>
        <dbReference type="ChEBI" id="CHEBI:37563"/>
    </ligand>
</feature>
<feature type="binding site" evidence="1">
    <location>
        <position position="164"/>
    </location>
    <ligand>
        <name>ATP</name>
        <dbReference type="ChEBI" id="CHEBI:30616"/>
    </ligand>
</feature>
<feature type="binding site" evidence="1">
    <location>
        <position position="164"/>
    </location>
    <ligand>
        <name>CTP</name>
        <dbReference type="ChEBI" id="CHEBI:37563"/>
    </ligand>
</feature>
<sequence>MDKSLFEQARPILEQIQDNGFEAYYVGGSVRDYVMGRNIHDIDITTSATPDEIESIFSHTIPVGKEHGTINVVFNDENYEVTTFRAEEDYVDHRRPSGVTFVRDLYEDLQRRDFTMNAIAMDTAYKLYDYFDGQQDINNRIIRTVGIAEERFQEDALRMIRCLRFQSQLSFDIATETFEAMRIQMADIKFLSIERIVIELTKLMRGINVEKSFNHLKSLKAFNYMPYFEHLDMNQINVTEAIDLELLIAIVSVKFDINYSLKPLKLSNRQVKDINQYIQIMNALPSIITKEQLKMFVYDYDTHLIKNVMVAADVIKANDIQGHEPLIVNLQTIDETLHRLPMHNRKDMMVNGGVLMAHLNAKSGPWLKDVLRQIEIAIVTGKVSNEETEILKWVDNHVKI</sequence>
<dbReference type="EC" id="2.7.7.72" evidence="1"/>
<dbReference type="EMBL" id="BA000033">
    <property type="protein sequence ID" value="BAB95212.1"/>
    <property type="molecule type" value="Genomic_DNA"/>
</dbReference>
<dbReference type="RefSeq" id="WP_000361543.1">
    <property type="nucleotide sequence ID" value="NC_003923.1"/>
</dbReference>
<dbReference type="SMR" id="Q8NWP0"/>
<dbReference type="KEGG" id="sam:MW1347"/>
<dbReference type="HOGENOM" id="CLU_015961_3_0_9"/>
<dbReference type="GO" id="GO:0005524">
    <property type="term" value="F:ATP binding"/>
    <property type="evidence" value="ECO:0007669"/>
    <property type="project" value="UniProtKB-UniRule"/>
</dbReference>
<dbReference type="GO" id="GO:0004810">
    <property type="term" value="F:CCA tRNA nucleotidyltransferase activity"/>
    <property type="evidence" value="ECO:0007669"/>
    <property type="project" value="UniProtKB-UniRule"/>
</dbReference>
<dbReference type="GO" id="GO:0000287">
    <property type="term" value="F:magnesium ion binding"/>
    <property type="evidence" value="ECO:0007669"/>
    <property type="project" value="UniProtKB-UniRule"/>
</dbReference>
<dbReference type="GO" id="GO:0000049">
    <property type="term" value="F:tRNA binding"/>
    <property type="evidence" value="ECO:0007669"/>
    <property type="project" value="UniProtKB-UniRule"/>
</dbReference>
<dbReference type="GO" id="GO:0042245">
    <property type="term" value="P:RNA repair"/>
    <property type="evidence" value="ECO:0007669"/>
    <property type="project" value="UniProtKB-KW"/>
</dbReference>
<dbReference type="GO" id="GO:0001680">
    <property type="term" value="P:tRNA 3'-terminal CCA addition"/>
    <property type="evidence" value="ECO:0007669"/>
    <property type="project" value="UniProtKB-UniRule"/>
</dbReference>
<dbReference type="CDD" id="cd05398">
    <property type="entry name" value="NT_ClassII-CCAase"/>
    <property type="match status" value="1"/>
</dbReference>
<dbReference type="Gene3D" id="1.10.246.80">
    <property type="match status" value="1"/>
</dbReference>
<dbReference type="Gene3D" id="3.30.460.10">
    <property type="entry name" value="Beta Polymerase, domain 2"/>
    <property type="match status" value="1"/>
</dbReference>
<dbReference type="Gene3D" id="1.10.3090.10">
    <property type="entry name" value="cca-adding enzyme, domain 2"/>
    <property type="match status" value="1"/>
</dbReference>
<dbReference type="HAMAP" id="MF_01263">
    <property type="entry name" value="CCA_bact_type3"/>
    <property type="match status" value="1"/>
</dbReference>
<dbReference type="InterPro" id="IPR050264">
    <property type="entry name" value="Bact_CCA-adding_enz_type3_sf"/>
</dbReference>
<dbReference type="InterPro" id="IPR032810">
    <property type="entry name" value="CCA-adding_enz_C"/>
</dbReference>
<dbReference type="InterPro" id="IPR023068">
    <property type="entry name" value="CCA-adding_enz_firmicutes"/>
</dbReference>
<dbReference type="InterPro" id="IPR043519">
    <property type="entry name" value="NT_sf"/>
</dbReference>
<dbReference type="InterPro" id="IPR002646">
    <property type="entry name" value="PolA_pol_head_dom"/>
</dbReference>
<dbReference type="InterPro" id="IPR032828">
    <property type="entry name" value="PolyA_RNA-bd"/>
</dbReference>
<dbReference type="NCBIfam" id="NF009814">
    <property type="entry name" value="PRK13299.1"/>
    <property type="match status" value="1"/>
</dbReference>
<dbReference type="PANTHER" id="PTHR46173">
    <property type="entry name" value="CCA TRNA NUCLEOTIDYLTRANSFERASE 1, MITOCHONDRIAL"/>
    <property type="match status" value="1"/>
</dbReference>
<dbReference type="PANTHER" id="PTHR46173:SF1">
    <property type="entry name" value="CCA TRNA NUCLEOTIDYLTRANSFERASE 1, MITOCHONDRIAL"/>
    <property type="match status" value="1"/>
</dbReference>
<dbReference type="Pfam" id="PF01743">
    <property type="entry name" value="PolyA_pol"/>
    <property type="match status" value="1"/>
</dbReference>
<dbReference type="Pfam" id="PF12627">
    <property type="entry name" value="PolyA_pol_RNAbd"/>
    <property type="match status" value="1"/>
</dbReference>
<dbReference type="Pfam" id="PF13735">
    <property type="entry name" value="tRNA_NucTran2_2"/>
    <property type="match status" value="1"/>
</dbReference>
<dbReference type="SUPFAM" id="SSF81301">
    <property type="entry name" value="Nucleotidyltransferase"/>
    <property type="match status" value="1"/>
</dbReference>
<dbReference type="SUPFAM" id="SSF81891">
    <property type="entry name" value="Poly A polymerase C-terminal region-like"/>
    <property type="match status" value="1"/>
</dbReference>
<proteinExistence type="inferred from homology"/>
<protein>
    <recommendedName>
        <fullName evidence="1">CCA-adding enzyme</fullName>
        <ecNumber evidence="1">2.7.7.72</ecNumber>
    </recommendedName>
    <alternativeName>
        <fullName evidence="1">CCA tRNA nucleotidyltransferase</fullName>
    </alternativeName>
    <alternativeName>
        <fullName evidence="1">tRNA CCA-pyrophosphorylase</fullName>
    </alternativeName>
    <alternativeName>
        <fullName evidence="1">tRNA adenylyl-/cytidylyl- transferase</fullName>
    </alternativeName>
    <alternativeName>
        <fullName evidence="1">tRNA nucleotidyltransferase</fullName>
    </alternativeName>
    <alternativeName>
        <fullName evidence="1">tRNA-NT</fullName>
    </alternativeName>
</protein>
<keyword id="KW-0067">ATP-binding</keyword>
<keyword id="KW-0460">Magnesium</keyword>
<keyword id="KW-0479">Metal-binding</keyword>
<keyword id="KW-0547">Nucleotide-binding</keyword>
<keyword id="KW-0548">Nucleotidyltransferase</keyword>
<keyword id="KW-0692">RNA repair</keyword>
<keyword id="KW-0694">RNA-binding</keyword>
<keyword id="KW-0808">Transferase</keyword>
<keyword id="KW-0819">tRNA processing</keyword>
<comment type="function">
    <text evidence="1">Catalyzes the addition and repair of the essential 3'-terminal CCA sequence in tRNAs without using a nucleic acid template. Adds these three nucleotides in the order of C, C, and A to the tRNA nucleotide-73, using CTP and ATP as substrates and producing inorganic pyrophosphate. tRNA 3'-terminal CCA addition is required both for tRNA processing and repair. Also involved in tRNA surveillance by mediating tandem CCA addition to generate a CCACCA at the 3' terminus of unstable tRNAs. While stable tRNAs receive only 3'-terminal CCA, unstable tRNAs are marked with CCACCA and rapidly degraded.</text>
</comment>
<comment type="catalytic activity">
    <reaction evidence="1">
        <text>a tRNA precursor + 2 CTP + ATP = a tRNA with a 3' CCA end + 3 diphosphate</text>
        <dbReference type="Rhea" id="RHEA:14433"/>
        <dbReference type="Rhea" id="RHEA-COMP:10465"/>
        <dbReference type="Rhea" id="RHEA-COMP:10468"/>
        <dbReference type="ChEBI" id="CHEBI:30616"/>
        <dbReference type="ChEBI" id="CHEBI:33019"/>
        <dbReference type="ChEBI" id="CHEBI:37563"/>
        <dbReference type="ChEBI" id="CHEBI:74896"/>
        <dbReference type="ChEBI" id="CHEBI:83071"/>
        <dbReference type="EC" id="2.7.7.72"/>
    </reaction>
</comment>
<comment type="catalytic activity">
    <reaction evidence="1">
        <text>a tRNA with a 3' CCA end + 2 CTP + ATP = a tRNA with a 3' CCACCA end + 3 diphosphate</text>
        <dbReference type="Rhea" id="RHEA:76235"/>
        <dbReference type="Rhea" id="RHEA-COMP:10468"/>
        <dbReference type="Rhea" id="RHEA-COMP:18655"/>
        <dbReference type="ChEBI" id="CHEBI:30616"/>
        <dbReference type="ChEBI" id="CHEBI:33019"/>
        <dbReference type="ChEBI" id="CHEBI:37563"/>
        <dbReference type="ChEBI" id="CHEBI:83071"/>
        <dbReference type="ChEBI" id="CHEBI:195187"/>
    </reaction>
    <physiologicalReaction direction="left-to-right" evidence="1">
        <dbReference type="Rhea" id="RHEA:76236"/>
    </physiologicalReaction>
</comment>
<comment type="cofactor">
    <cofactor evidence="1">
        <name>Mg(2+)</name>
        <dbReference type="ChEBI" id="CHEBI:18420"/>
    </cofactor>
</comment>
<comment type="subunit">
    <text evidence="1">Homodimer.</text>
</comment>
<comment type="miscellaneous">
    <text evidence="1">A single active site specifically recognizes both ATP and CTP and is responsible for their addition.</text>
</comment>
<comment type="similarity">
    <text evidence="1">Belongs to the tRNA nucleotidyltransferase/poly(A) polymerase family. Bacterial CCA-adding enzyme type 3 subfamily.</text>
</comment>
<accession>Q8NWP0</accession>
<gene>
    <name evidence="1" type="primary">cca</name>
    <name type="ordered locus">MW1347</name>
</gene>
<name>CCA_STAAW</name>